<proteinExistence type="evidence at protein level"/>
<name>PED1A_HUMAN</name>
<sequence length="454" mass="51782">MVFCLSSEEPRRPLRSDMVHFQASEVQQLLHNKFVVILGDSIQRAVYKDLVLLLQKDSLLTAAQLKAKGELSFEQDQLVAGGQLGELHNGTQYREVRQFCSGSGHHLVRFYFLTRVYSEYLEDVLEELTYGPAPDLVIINSCLWDLSRYGRCSMESYRENLERVFVRMDQVLPDSCLLVWNMAMPLGERITGGFLLPELQPLAGSLRRDVVEGNFYSATLAGDHCFDVLDLHFHFRHAVQHRHRDGVHWDQHAHRHLSHLLLTHVADAWGVELPKRGYPPDPWIEDWAEMNHPFQGSHRQTPDFGEHLALLPPPPSSLPPPMPFPYPLPQPSPPPLFPPLPQDTPFFPGQPFPPHEFFNYNPVEDFSMPPHLGCGPGVNFVPGPLPPPIPGPNPHGQHWGPVVHRGMPRYVPNSPYHVRRMGGPCRQRLRHSERLIHTYKLDRRPPAHSGTWPG</sequence>
<organism>
    <name type="scientific">Homo sapiens</name>
    <name type="common">Human</name>
    <dbReference type="NCBI Taxonomy" id="9606"/>
    <lineage>
        <taxon>Eukaryota</taxon>
        <taxon>Metazoa</taxon>
        <taxon>Chordata</taxon>
        <taxon>Craniata</taxon>
        <taxon>Vertebrata</taxon>
        <taxon>Euteleostomi</taxon>
        <taxon>Mammalia</taxon>
        <taxon>Eutheria</taxon>
        <taxon>Euarchontoglires</taxon>
        <taxon>Primates</taxon>
        <taxon>Haplorrhini</taxon>
        <taxon>Catarrhini</taxon>
        <taxon>Hominidae</taxon>
        <taxon>Homo</taxon>
    </lineage>
</organism>
<reference key="1">
    <citation type="journal article" date="2004" name="Nat. Genet.">
        <title>Complete sequencing and characterization of 21,243 full-length human cDNAs.</title>
        <authorList>
            <person name="Ota T."/>
            <person name="Suzuki Y."/>
            <person name="Nishikawa T."/>
            <person name="Otsuki T."/>
            <person name="Sugiyama T."/>
            <person name="Irie R."/>
            <person name="Wakamatsu A."/>
            <person name="Hayashi K."/>
            <person name="Sato H."/>
            <person name="Nagai K."/>
            <person name="Kimura K."/>
            <person name="Makita H."/>
            <person name="Sekine M."/>
            <person name="Obayashi M."/>
            <person name="Nishi T."/>
            <person name="Shibahara T."/>
            <person name="Tanaka T."/>
            <person name="Ishii S."/>
            <person name="Yamamoto J."/>
            <person name="Saito K."/>
            <person name="Kawai Y."/>
            <person name="Isono Y."/>
            <person name="Nakamura Y."/>
            <person name="Nagahari K."/>
            <person name="Murakami K."/>
            <person name="Yasuda T."/>
            <person name="Iwayanagi T."/>
            <person name="Wagatsuma M."/>
            <person name="Shiratori A."/>
            <person name="Sudo H."/>
            <person name="Hosoiri T."/>
            <person name="Kaku Y."/>
            <person name="Kodaira H."/>
            <person name="Kondo H."/>
            <person name="Sugawara M."/>
            <person name="Takahashi M."/>
            <person name="Kanda K."/>
            <person name="Yokoi T."/>
            <person name="Furuya T."/>
            <person name="Kikkawa E."/>
            <person name="Omura Y."/>
            <person name="Abe K."/>
            <person name="Kamihara K."/>
            <person name="Katsuta N."/>
            <person name="Sato K."/>
            <person name="Tanikawa M."/>
            <person name="Yamazaki M."/>
            <person name="Ninomiya K."/>
            <person name="Ishibashi T."/>
            <person name="Yamashita H."/>
            <person name="Murakawa K."/>
            <person name="Fujimori K."/>
            <person name="Tanai H."/>
            <person name="Kimata M."/>
            <person name="Watanabe M."/>
            <person name="Hiraoka S."/>
            <person name="Chiba Y."/>
            <person name="Ishida S."/>
            <person name="Ono Y."/>
            <person name="Takiguchi S."/>
            <person name="Watanabe S."/>
            <person name="Yosida M."/>
            <person name="Hotuta T."/>
            <person name="Kusano J."/>
            <person name="Kanehori K."/>
            <person name="Takahashi-Fujii A."/>
            <person name="Hara H."/>
            <person name="Tanase T.-O."/>
            <person name="Nomura Y."/>
            <person name="Togiya S."/>
            <person name="Komai F."/>
            <person name="Hara R."/>
            <person name="Takeuchi K."/>
            <person name="Arita M."/>
            <person name="Imose N."/>
            <person name="Musashino K."/>
            <person name="Yuuki H."/>
            <person name="Oshima A."/>
            <person name="Sasaki N."/>
            <person name="Aotsuka S."/>
            <person name="Yoshikawa Y."/>
            <person name="Matsunawa H."/>
            <person name="Ichihara T."/>
            <person name="Shiohata N."/>
            <person name="Sano S."/>
            <person name="Moriya S."/>
            <person name="Momiyama H."/>
            <person name="Satoh N."/>
            <person name="Takami S."/>
            <person name="Terashima Y."/>
            <person name="Suzuki O."/>
            <person name="Nakagawa S."/>
            <person name="Senoh A."/>
            <person name="Mizoguchi H."/>
            <person name="Goto Y."/>
            <person name="Shimizu F."/>
            <person name="Wakebe H."/>
            <person name="Hishigaki H."/>
            <person name="Watanabe T."/>
            <person name="Sugiyama A."/>
            <person name="Takemoto M."/>
            <person name="Kawakami B."/>
            <person name="Yamazaki M."/>
            <person name="Watanabe K."/>
            <person name="Kumagai A."/>
            <person name="Itakura S."/>
            <person name="Fukuzumi Y."/>
            <person name="Fujimori Y."/>
            <person name="Komiyama M."/>
            <person name="Tashiro H."/>
            <person name="Tanigami A."/>
            <person name="Fujiwara T."/>
            <person name="Ono T."/>
            <person name="Yamada K."/>
            <person name="Fujii Y."/>
            <person name="Ozaki K."/>
            <person name="Hirao M."/>
            <person name="Ohmori Y."/>
            <person name="Kawabata A."/>
            <person name="Hikiji T."/>
            <person name="Kobatake N."/>
            <person name="Inagaki H."/>
            <person name="Ikema Y."/>
            <person name="Okamoto S."/>
            <person name="Okitani R."/>
            <person name="Kawakami T."/>
            <person name="Noguchi S."/>
            <person name="Itoh T."/>
            <person name="Shigeta K."/>
            <person name="Senba T."/>
            <person name="Matsumura K."/>
            <person name="Nakajima Y."/>
            <person name="Mizuno T."/>
            <person name="Morinaga M."/>
            <person name="Sasaki M."/>
            <person name="Togashi T."/>
            <person name="Oyama M."/>
            <person name="Hata H."/>
            <person name="Watanabe M."/>
            <person name="Komatsu T."/>
            <person name="Mizushima-Sugano J."/>
            <person name="Satoh T."/>
            <person name="Shirai Y."/>
            <person name="Takahashi Y."/>
            <person name="Nakagawa K."/>
            <person name="Okumura K."/>
            <person name="Nagase T."/>
            <person name="Nomura N."/>
            <person name="Kikuchi H."/>
            <person name="Masuho Y."/>
            <person name="Yamashita R."/>
            <person name="Nakai K."/>
            <person name="Yada T."/>
            <person name="Nakamura Y."/>
            <person name="Ohara O."/>
            <person name="Isogai T."/>
            <person name="Sugano S."/>
        </authorList>
    </citation>
    <scope>NUCLEOTIDE SEQUENCE [LARGE SCALE MRNA] (ISOFORMS 1 AND 2)</scope>
</reference>
<reference key="2">
    <citation type="journal article" date="2001" name="Nature">
        <title>The DNA sequence and comparative analysis of human chromosome 20.</title>
        <authorList>
            <person name="Deloukas P."/>
            <person name="Matthews L.H."/>
            <person name="Ashurst J.L."/>
            <person name="Burton J."/>
            <person name="Gilbert J.G.R."/>
            <person name="Jones M."/>
            <person name="Stavrides G."/>
            <person name="Almeida J.P."/>
            <person name="Babbage A.K."/>
            <person name="Bagguley C.L."/>
            <person name="Bailey J."/>
            <person name="Barlow K.F."/>
            <person name="Bates K.N."/>
            <person name="Beard L.M."/>
            <person name="Beare D.M."/>
            <person name="Beasley O.P."/>
            <person name="Bird C.P."/>
            <person name="Blakey S.E."/>
            <person name="Bridgeman A.M."/>
            <person name="Brown A.J."/>
            <person name="Buck D."/>
            <person name="Burrill W.D."/>
            <person name="Butler A.P."/>
            <person name="Carder C."/>
            <person name="Carter N.P."/>
            <person name="Chapman J.C."/>
            <person name="Clamp M."/>
            <person name="Clark G."/>
            <person name="Clark L.N."/>
            <person name="Clark S.Y."/>
            <person name="Clee C.M."/>
            <person name="Clegg S."/>
            <person name="Cobley V.E."/>
            <person name="Collier R.E."/>
            <person name="Connor R.E."/>
            <person name="Corby N.R."/>
            <person name="Coulson A."/>
            <person name="Coville G.J."/>
            <person name="Deadman R."/>
            <person name="Dhami P.D."/>
            <person name="Dunn M."/>
            <person name="Ellington A.G."/>
            <person name="Frankland J.A."/>
            <person name="Fraser A."/>
            <person name="French L."/>
            <person name="Garner P."/>
            <person name="Grafham D.V."/>
            <person name="Griffiths C."/>
            <person name="Griffiths M.N.D."/>
            <person name="Gwilliam R."/>
            <person name="Hall R.E."/>
            <person name="Hammond S."/>
            <person name="Harley J.L."/>
            <person name="Heath P.D."/>
            <person name="Ho S."/>
            <person name="Holden J.L."/>
            <person name="Howden P.J."/>
            <person name="Huckle E."/>
            <person name="Hunt A.R."/>
            <person name="Hunt S.E."/>
            <person name="Jekosch K."/>
            <person name="Johnson C.M."/>
            <person name="Johnson D."/>
            <person name="Kay M.P."/>
            <person name="Kimberley A.M."/>
            <person name="King A."/>
            <person name="Knights A."/>
            <person name="Laird G.K."/>
            <person name="Lawlor S."/>
            <person name="Lehvaeslaiho M.H."/>
            <person name="Leversha M.A."/>
            <person name="Lloyd C."/>
            <person name="Lloyd D.M."/>
            <person name="Lovell J.D."/>
            <person name="Marsh V.L."/>
            <person name="Martin S.L."/>
            <person name="McConnachie L.J."/>
            <person name="McLay K."/>
            <person name="McMurray A.A."/>
            <person name="Milne S.A."/>
            <person name="Mistry D."/>
            <person name="Moore M.J.F."/>
            <person name="Mullikin J.C."/>
            <person name="Nickerson T."/>
            <person name="Oliver K."/>
            <person name="Parker A."/>
            <person name="Patel R."/>
            <person name="Pearce T.A.V."/>
            <person name="Peck A.I."/>
            <person name="Phillimore B.J.C.T."/>
            <person name="Prathalingam S.R."/>
            <person name="Plumb R.W."/>
            <person name="Ramsay H."/>
            <person name="Rice C.M."/>
            <person name="Ross M.T."/>
            <person name="Scott C.E."/>
            <person name="Sehra H.K."/>
            <person name="Shownkeen R."/>
            <person name="Sims S."/>
            <person name="Skuce C.D."/>
            <person name="Smith M.L."/>
            <person name="Soderlund C."/>
            <person name="Steward C.A."/>
            <person name="Sulston J.E."/>
            <person name="Swann R.M."/>
            <person name="Sycamore N."/>
            <person name="Taylor R."/>
            <person name="Tee L."/>
            <person name="Thomas D.W."/>
            <person name="Thorpe A."/>
            <person name="Tracey A."/>
            <person name="Tromans A.C."/>
            <person name="Vaudin M."/>
            <person name="Wall M."/>
            <person name="Wallis J.M."/>
            <person name="Whitehead S.L."/>
            <person name="Whittaker P."/>
            <person name="Willey D.L."/>
            <person name="Williams L."/>
            <person name="Williams S.A."/>
            <person name="Wilming L."/>
            <person name="Wray P.W."/>
            <person name="Hubbard T."/>
            <person name="Durbin R.M."/>
            <person name="Bentley D.R."/>
            <person name="Beck S."/>
            <person name="Rogers J."/>
        </authorList>
    </citation>
    <scope>NUCLEOTIDE SEQUENCE [LARGE SCALE GENOMIC DNA]</scope>
</reference>
<reference key="3">
    <citation type="journal article" date="2004" name="Genome Res.">
        <title>The status, quality, and expansion of the NIH full-length cDNA project: the Mammalian Gene Collection (MGC).</title>
        <authorList>
            <consortium name="The MGC Project Team"/>
        </authorList>
    </citation>
    <scope>NUCLEOTIDE SEQUENCE [LARGE SCALE MRNA] (ISOFORMS 1; 3 AND 4)</scope>
    <source>
        <tissue>Blood</tissue>
        <tissue>Brain</tissue>
        <tissue>Skin</tissue>
    </source>
</reference>
<reference key="4">
    <citation type="journal article" date="2003" name="Proc. Natl. Acad. Sci. U.S.A.">
        <title>Immunomic analysis of human sarcoma.</title>
        <authorList>
            <person name="Lee S.-Y."/>
            <person name="Obata Y."/>
            <person name="Yoshida M."/>
            <person name="Stockert E."/>
            <person name="Williamson B."/>
            <person name="Jungbluth A.A."/>
            <person name="Chen Y.-T."/>
            <person name="Old L.J."/>
            <person name="Scanlan M.J."/>
        </authorList>
    </citation>
    <scope>NUCLEOTIDE SEQUENCE [MRNA] OF 58-301 (ISOFORM 1)</scope>
    <source>
        <tissue>Testis</tissue>
    </source>
</reference>
<keyword id="KW-0025">Alternative splicing</keyword>
<keyword id="KW-1267">Proteomics identification</keyword>
<keyword id="KW-1185">Reference proteome</keyword>
<accession>Q9H1Q7</accession>
<accession>Q5JUA5</accession>
<accession>Q5JUA6</accession>
<accession>Q6PK19</accession>
<accession>Q86WF5</accession>
<accession>Q96CG7</accession>
<accession>Q9H1Q6</accession>
<accession>Q9H6D1</accession>
<comment type="interaction">
    <interactant intactId="EBI-748452">
        <id>Q9H1Q7</id>
    </interactant>
    <interactant intactId="EBI-10172290">
        <id>P60409</id>
        <label>KRTAP10-7</label>
    </interactant>
    <organismsDiffer>false</organismsDiffer>
    <experiments>3</experiments>
</comment>
<comment type="interaction">
    <interactant intactId="EBI-748452">
        <id>Q9H1Q7</id>
    </interactant>
    <interactant intactId="EBI-10171774">
        <id>P60410</id>
        <label>KRTAP10-8</label>
    </interactant>
    <organismsDiffer>false</organismsDiffer>
    <experiments>3</experiments>
</comment>
<comment type="interaction">
    <interactant intactId="EBI-748452">
        <id>Q9H1Q7</id>
    </interactant>
    <interactant intactId="EBI-945833">
        <id>Q7Z3S9</id>
        <label>NOTCH2NLA</label>
    </interactant>
    <organismsDiffer>false</organismsDiffer>
    <experiments>3</experiments>
</comment>
<comment type="alternative products">
    <event type="alternative splicing"/>
    <isoform>
        <id>Q9H1Q7-1</id>
        <name>1</name>
        <sequence type="displayed"/>
    </isoform>
    <isoform>
        <id>Q9H1Q7-2</id>
        <name>2</name>
        <sequence type="described" ref="VSP_003818"/>
    </isoform>
    <isoform>
        <id>Q9H1Q7-3</id>
        <name>3</name>
        <sequence type="described" ref="VSP_003818 VSP_003819"/>
    </isoform>
    <isoform>
        <id>Q9H1Q7-4</id>
        <name>4</name>
        <sequence type="described" ref="VSP_013917 VSP_013918"/>
    </isoform>
</comment>
<comment type="similarity">
    <text evidence="3">Belongs to the PC-esterase family.</text>
</comment>
<comment type="sequence caution" evidence="3">
    <conflict type="miscellaneous discrepancy">
        <sequence resource="EMBL-CDS" id="AAO65166"/>
    </conflict>
    <text>Contaminating sequence. Sequence of unknown origin in the C-terminal part.</text>
</comment>
<gene>
    <name type="primary">PCED1A</name>
    <name type="synonym">C20orf81</name>
    <name type="synonym">FAM113A</name>
</gene>
<evidence type="ECO:0000303" key="1">
    <source>
    </source>
</evidence>
<evidence type="ECO:0000303" key="2">
    <source>
    </source>
</evidence>
<evidence type="ECO:0000305" key="3"/>
<dbReference type="EMBL" id="AK056353">
    <property type="protein sequence ID" value="BAB71160.1"/>
    <property type="molecule type" value="mRNA"/>
</dbReference>
<dbReference type="EMBL" id="AK026029">
    <property type="protein sequence ID" value="BAB15328.1"/>
    <property type="molecule type" value="mRNA"/>
</dbReference>
<dbReference type="EMBL" id="AL161656">
    <property type="status" value="NOT_ANNOTATED_CDS"/>
    <property type="molecule type" value="Genomic_DNA"/>
</dbReference>
<dbReference type="EMBL" id="BC008864">
    <property type="protein sequence ID" value="AAH08864.1"/>
    <property type="molecule type" value="mRNA"/>
</dbReference>
<dbReference type="EMBL" id="BC014247">
    <property type="protein sequence ID" value="AAH14247.1"/>
    <property type="molecule type" value="mRNA"/>
</dbReference>
<dbReference type="EMBL" id="BC037240">
    <property type="protein sequence ID" value="AAH37240.2"/>
    <property type="molecule type" value="mRNA"/>
</dbReference>
<dbReference type="EMBL" id="BC051816">
    <property type="protein sequence ID" value="AAH51816.1"/>
    <property type="molecule type" value="mRNA"/>
</dbReference>
<dbReference type="EMBL" id="AY211913">
    <property type="protein sequence ID" value="AAO65166.1"/>
    <property type="status" value="ALT_SEQ"/>
    <property type="molecule type" value="mRNA"/>
</dbReference>
<dbReference type="CCDS" id="CCDS13035.1">
    <molecule id="Q9H1Q7-1"/>
</dbReference>
<dbReference type="CCDS" id="CCDS59442.1">
    <molecule id="Q9H1Q7-2"/>
</dbReference>
<dbReference type="RefSeq" id="NP_001258097.1">
    <molecule id="Q9H1Q7-2"/>
    <property type="nucleotide sequence ID" value="NM_001271168.2"/>
</dbReference>
<dbReference type="RefSeq" id="NP_073597.2">
    <molecule id="Q9H1Q7-1"/>
    <property type="nucleotide sequence ID" value="NM_022760.4"/>
</dbReference>
<dbReference type="RefSeq" id="XP_005260861.1">
    <molecule id="Q9H1Q7-1"/>
    <property type="nucleotide sequence ID" value="XM_005260804.3"/>
</dbReference>
<dbReference type="RefSeq" id="XP_005260862.1">
    <molecule id="Q9H1Q7-2"/>
    <property type="nucleotide sequence ID" value="XM_005260805.4"/>
</dbReference>
<dbReference type="RefSeq" id="XP_047296335.1">
    <molecule id="Q9H1Q7-1"/>
    <property type="nucleotide sequence ID" value="XM_047440379.1"/>
</dbReference>
<dbReference type="RefSeq" id="XP_047296336.1">
    <molecule id="Q9H1Q7-2"/>
    <property type="nucleotide sequence ID" value="XM_047440380.1"/>
</dbReference>
<dbReference type="RefSeq" id="XP_054179835.1">
    <molecule id="Q9H1Q7-1"/>
    <property type="nucleotide sequence ID" value="XM_054323860.1"/>
</dbReference>
<dbReference type="RefSeq" id="XP_054179836.1">
    <molecule id="Q9H1Q7-1"/>
    <property type="nucleotide sequence ID" value="XM_054323861.1"/>
</dbReference>
<dbReference type="RefSeq" id="XP_054179837.1">
    <molecule id="Q9H1Q7-2"/>
    <property type="nucleotide sequence ID" value="XM_054323862.1"/>
</dbReference>
<dbReference type="SMR" id="Q9H1Q7"/>
<dbReference type="BioGRID" id="122284">
    <property type="interactions" value="19"/>
</dbReference>
<dbReference type="FunCoup" id="Q9H1Q7">
    <property type="interactions" value="366"/>
</dbReference>
<dbReference type="IntAct" id="Q9H1Q7">
    <property type="interactions" value="14"/>
</dbReference>
<dbReference type="MINT" id="Q9H1Q7"/>
<dbReference type="STRING" id="9606.ENSP00000353868"/>
<dbReference type="iPTMnet" id="Q9H1Q7"/>
<dbReference type="PhosphoSitePlus" id="Q9H1Q7"/>
<dbReference type="BioMuta" id="PCED1A"/>
<dbReference type="DMDM" id="25008325"/>
<dbReference type="MassIVE" id="Q9H1Q7"/>
<dbReference type="PaxDb" id="9606-ENSP00000353868"/>
<dbReference type="PeptideAtlas" id="Q9H1Q7"/>
<dbReference type="ProteomicsDB" id="80437">
    <molecule id="Q9H1Q7-1"/>
</dbReference>
<dbReference type="ProteomicsDB" id="80438">
    <molecule id="Q9H1Q7-2"/>
</dbReference>
<dbReference type="ProteomicsDB" id="80439">
    <molecule id="Q9H1Q7-3"/>
</dbReference>
<dbReference type="ProteomicsDB" id="80440">
    <molecule id="Q9H1Q7-4"/>
</dbReference>
<dbReference type="Antibodypedia" id="23331">
    <property type="antibodies" value="97 antibodies from 17 providers"/>
</dbReference>
<dbReference type="DNASU" id="64773"/>
<dbReference type="Ensembl" id="ENST00000356872.7">
    <molecule id="Q9H1Q7-2"/>
    <property type="protein sequence ID" value="ENSP00000349334.3"/>
    <property type="gene ID" value="ENSG00000132635.17"/>
</dbReference>
<dbReference type="Ensembl" id="ENST00000360652.7">
    <molecule id="Q9H1Q7-1"/>
    <property type="protein sequence ID" value="ENSP00000353868.2"/>
    <property type="gene ID" value="ENSG00000132635.17"/>
</dbReference>
<dbReference type="GeneID" id="64773"/>
<dbReference type="KEGG" id="hsa:64773"/>
<dbReference type="MANE-Select" id="ENST00000360652.7">
    <property type="protein sequence ID" value="ENSP00000353868.2"/>
    <property type="RefSeq nucleotide sequence ID" value="NM_022760.6"/>
    <property type="RefSeq protein sequence ID" value="NP_073597.2"/>
</dbReference>
<dbReference type="UCSC" id="uc002wgz.3">
    <molecule id="Q9H1Q7-1"/>
    <property type="organism name" value="human"/>
</dbReference>
<dbReference type="AGR" id="HGNC:16212"/>
<dbReference type="CTD" id="64773"/>
<dbReference type="GeneCards" id="PCED1A"/>
<dbReference type="HGNC" id="HGNC:16212">
    <property type="gene designation" value="PCED1A"/>
</dbReference>
<dbReference type="HPA" id="ENSG00000132635">
    <property type="expression patterns" value="Low tissue specificity"/>
</dbReference>
<dbReference type="neXtProt" id="NX_Q9H1Q7"/>
<dbReference type="OpenTargets" id="ENSG00000132635"/>
<dbReference type="PharmGKB" id="PA25790"/>
<dbReference type="VEuPathDB" id="HostDB:ENSG00000132635"/>
<dbReference type="eggNOG" id="ENOG502QVBZ">
    <property type="taxonomic scope" value="Eukaryota"/>
</dbReference>
<dbReference type="GeneTree" id="ENSGT00390000002231"/>
<dbReference type="HOGENOM" id="CLU_053865_0_0_1"/>
<dbReference type="InParanoid" id="Q9H1Q7"/>
<dbReference type="OMA" id="RQPPDFG"/>
<dbReference type="OrthoDB" id="9975373at2759"/>
<dbReference type="PAN-GO" id="Q9H1Q7">
    <property type="GO annotations" value="0 GO annotations based on evolutionary models"/>
</dbReference>
<dbReference type="PhylomeDB" id="Q9H1Q7"/>
<dbReference type="TreeFam" id="TF328972"/>
<dbReference type="PathwayCommons" id="Q9H1Q7"/>
<dbReference type="SignaLink" id="Q9H1Q7"/>
<dbReference type="BioGRID-ORCS" id="64773">
    <property type="hits" value="16 hits in 1158 CRISPR screens"/>
</dbReference>
<dbReference type="CD-CODE" id="1A18FFC4">
    <property type="entry name" value="Paraspeckle"/>
</dbReference>
<dbReference type="ChiTaRS" id="PCED1A">
    <property type="organism name" value="human"/>
</dbReference>
<dbReference type="GenomeRNAi" id="64773"/>
<dbReference type="Pharos" id="Q9H1Q7">
    <property type="development level" value="Tdark"/>
</dbReference>
<dbReference type="PRO" id="PR:Q9H1Q7"/>
<dbReference type="Proteomes" id="UP000005640">
    <property type="component" value="Chromosome 20"/>
</dbReference>
<dbReference type="RNAct" id="Q9H1Q7">
    <property type="molecule type" value="protein"/>
</dbReference>
<dbReference type="Bgee" id="ENSG00000132635">
    <property type="expression patterns" value="Expressed in right uterine tube and 169 other cell types or tissues"/>
</dbReference>
<dbReference type="ExpressionAtlas" id="Q9H1Q7">
    <property type="expression patterns" value="baseline and differential"/>
</dbReference>
<dbReference type="CDD" id="cd01842">
    <property type="entry name" value="SGNH_hydrolase_like_5"/>
    <property type="match status" value="1"/>
</dbReference>
<dbReference type="PANTHER" id="PTHR14469:SF3">
    <property type="entry name" value="PC-ESTERASE DOMAIN-CONTAINING PROTEIN 1A"/>
    <property type="match status" value="1"/>
</dbReference>
<dbReference type="PANTHER" id="PTHR14469">
    <property type="entry name" value="SARCOMA ANTIGEN NY-SAR-23"/>
    <property type="match status" value="1"/>
</dbReference>
<dbReference type="SUPFAM" id="SSF52266">
    <property type="entry name" value="SGNH hydrolase"/>
    <property type="match status" value="1"/>
</dbReference>
<protein>
    <recommendedName>
        <fullName>PC-esterase domain-containing protein 1A</fullName>
    </recommendedName>
    <alternativeName>
        <fullName>Protein FAM113A</fullName>
    </alternativeName>
    <alternativeName>
        <fullName>Sarcoma antigen NY-SAR-23</fullName>
    </alternativeName>
</protein>
<feature type="chain" id="PRO_0000079446" description="PC-esterase domain-containing protein 1A">
    <location>
        <begin position="1"/>
        <end position="454"/>
    </location>
</feature>
<feature type="splice variant" id="VSP_003818" description="In isoform 2 and isoform 3." evidence="1 2">
    <location>
        <begin position="69"/>
        <end position="119"/>
    </location>
</feature>
<feature type="splice variant" id="VSP_013917" description="In isoform 4." evidence="2">
    <original>APDLVIINSCLWDLSRYGRC</original>
    <variation>SHPMNSSTIIQWRTSRCHPT</variation>
    <location>
        <begin position="133"/>
        <end position="152"/>
    </location>
</feature>
<feature type="splice variant" id="VSP_013918" description="In isoform 4." evidence="2">
    <location>
        <begin position="153"/>
        <end position="454"/>
    </location>
</feature>
<feature type="splice variant" id="VSP_003819" description="In isoform 3." evidence="2">
    <location>
        <begin position="264"/>
        <end position="354"/>
    </location>
</feature>
<feature type="sequence variant" id="VAR_021945" description="In dbSNP:rs2274670.">
    <original>Q</original>
    <variation>H</variation>
    <location>
        <position position="22"/>
    </location>
</feature>
<feature type="sequence conflict" description="In Ref. 3; AAH14247." evidence="3" ref="3">
    <original>A</original>
    <variation>V</variation>
    <location>
        <position position="253"/>
    </location>
</feature>
<feature type="sequence conflict" description="In Ref. 1; BAB15328." evidence="3" ref="1">
    <original>R</original>
    <variation>K</variation>
    <location>
        <position position="430"/>
    </location>
</feature>